<organismHost>
    <name type="scientific">Canis lupus familiaris</name>
    <name type="common">Dog</name>
    <name type="synonym">Canis familiaris</name>
    <dbReference type="NCBI Taxonomy" id="9615"/>
</organismHost>
<accession>O39619</accession>
<feature type="initiator methionine" description="Removed; by host" evidence="1">
    <location>
        <position position="1"/>
    </location>
</feature>
<feature type="chain" id="PRO_0000221829" description="Hexon protein" evidence="1">
    <location>
        <begin position="2"/>
        <end position="905"/>
    </location>
</feature>
<feature type="site" description="Involved in interaction with pre-protein VI" evidence="1">
    <location>
        <position position="729"/>
    </location>
</feature>
<feature type="modified residue" description="N-acetylalanine; by host" evidence="1">
    <location>
        <position position="2"/>
    </location>
</feature>
<feature type="modified residue" description="Phosphotyrosine; by host" evidence="1">
    <location>
        <position position="893"/>
    </location>
</feature>
<sequence>MATPSMLPQWSYMHIAGQDAAEYLSPALVQFAQATSSYFKLDNKFRNPTVAPTHDVTTERSQRLQLRFVPVMQEDGQYTYKTRFQLAVGDNRVLDMASTYFDIRGTLDRGPSFKPYSGTAYNALAPRAGANNCLFNGSGANINTLAQVPFAGAITVNGQAAVTDNTYQPEPQLGPESWVDGTLADLGDASGRALKASTPRMPCYGSYAPPTNENGGQATGAVERRFYKVTTNNNNEADALLYTEDVNLQTPDTHLVHQVSDDQVTGVQGLGQQAAPNRPNYIGFRDNFIGLMYYNSNGNLGVLAGQSSQLNAVVDLQDRNTELSYQLLLDALTDRSRYFSMWNQAVDSYDQDVRIIDNHGVEDDMPNYCFPLSGMGPLTNMTAMKVNNQNFQTDNTNVGPIQKIGFGNVEAMEINLNANLFKGFLYSNVALYLPDAYKYTPDNIVAPANANTYAYMNVRLPAANLIDTFVNIGARWSPDVMDSVNPFNHHRNAGLRYRSQLLGNGRYCSFHIQVPQKFFAIKNLLLLPGTYTYEWSFRKDVNMILQSSLGNDLRVDGASINIQSINLYASFFPMAHNTASTLEAMLRNDVNDQSFADYLSAANMLYPIPANTTNLPISIPARNWAGFRGWSFTRIKQRETPALGSPYDPYFTYSGSIPYLDSTFYLSHTFRRVSIMFDSSVSWPGNDRLLTPNEFEIKRYVDGEGYNVAQSNMTKDWFLVQMLAHYNIGYQGYHLPESYKDRMYSFLRNFEPMCRQLVDVTNYATYQSVTVGHQHNNSGYASALSTFNPREGHPYPANWPYPLIGVNAVPTVTQKKFLCDRTLWRIPFSSNFMSMGTLTDLGQNLLYSNSAHALDMTFEVDAMNEPTLLYVLFEVFDVARVHQPHRGVIEVVYLRTPFSAGNATT</sequence>
<protein>
    <recommendedName>
        <fullName evidence="1">Hexon protein</fullName>
        <shortName evidence="1">CP-H</shortName>
    </recommendedName>
    <alternativeName>
        <fullName evidence="1">Protein II</fullName>
    </alternativeName>
</protein>
<gene>
    <name evidence="1" type="primary">L3</name>
</gene>
<reference key="1">
    <citation type="journal article" date="1997" name="J. Gen. Virol.">
        <title>Complete DNA sequence of canine adenovirus type 1.</title>
        <authorList>
            <person name="Morrison M.D."/>
            <person name="Onions D.E."/>
            <person name="Nicolson L."/>
        </authorList>
    </citation>
    <scope>NUCLEOTIDE SEQUENCE [LARGE SCALE GENOMIC DNA]</scope>
</reference>
<evidence type="ECO:0000255" key="1">
    <source>
        <dbReference type="HAMAP-Rule" id="MF_04051"/>
    </source>
</evidence>
<evidence type="ECO:0000305" key="2"/>
<name>CAPSH_ADECR</name>
<organism>
    <name type="scientific">Canine adenovirus serotype 1 (strain RI261)</name>
    <name type="common">CAdV-1</name>
    <name type="synonym">Canine adenovirus 1 (strain RI261)</name>
    <dbReference type="NCBI Taxonomy" id="69151"/>
    <lineage>
        <taxon>Viruses</taxon>
        <taxon>Varidnaviria</taxon>
        <taxon>Bamfordvirae</taxon>
        <taxon>Preplasmiviricota</taxon>
        <taxon>Tectiliviricetes</taxon>
        <taxon>Rowavirales</taxon>
        <taxon>Adenoviridae</taxon>
        <taxon>Mastadenovirus</taxon>
        <taxon>Canine mastadenovirus A</taxon>
    </lineage>
</organism>
<keyword id="KW-0007">Acetylation</keyword>
<keyword id="KW-0167">Capsid protein</keyword>
<keyword id="KW-1176">Cytoplasmic inwards viral transport</keyword>
<keyword id="KW-1048">Host nucleus</keyword>
<keyword id="KW-0945">Host-virus interaction</keyword>
<keyword id="KW-0426">Late protein</keyword>
<keyword id="KW-1177">Microtubular inwards viral transport</keyword>
<keyword id="KW-0597">Phosphoprotein</keyword>
<keyword id="KW-1148">T=25 icosahedral capsid protein</keyword>
<keyword id="KW-0946">Virion</keyword>
<keyword id="KW-1160">Virus entry into host cell</keyword>
<dbReference type="EMBL" id="Y07760">
    <property type="protein sequence ID" value="CAA69066.1"/>
    <property type="molecule type" value="Genomic_DNA"/>
</dbReference>
<dbReference type="RefSeq" id="AP_000059.1">
    <property type="nucleotide sequence ID" value="AC_000003.1"/>
</dbReference>
<dbReference type="SMR" id="O39619"/>
<dbReference type="KEGG" id="vg:1488931"/>
<dbReference type="Proteomes" id="UP000126130">
    <property type="component" value="Segment"/>
</dbReference>
<dbReference type="GO" id="GO:0043657">
    <property type="term" value="C:host cell"/>
    <property type="evidence" value="ECO:0007669"/>
    <property type="project" value="GOC"/>
</dbReference>
<dbReference type="GO" id="GO:0042025">
    <property type="term" value="C:host cell nucleus"/>
    <property type="evidence" value="ECO:0007669"/>
    <property type="project" value="UniProtKB-SubCell"/>
</dbReference>
<dbReference type="GO" id="GO:0039623">
    <property type="term" value="C:T=25 icosahedral viral capsid"/>
    <property type="evidence" value="ECO:0007669"/>
    <property type="project" value="UniProtKB-UniRule"/>
</dbReference>
<dbReference type="GO" id="GO:0005198">
    <property type="term" value="F:structural molecule activity"/>
    <property type="evidence" value="ECO:0007669"/>
    <property type="project" value="UniProtKB-UniRule"/>
</dbReference>
<dbReference type="GO" id="GO:0075521">
    <property type="term" value="P:microtubule-dependent intracellular transport of viral material towards nucleus"/>
    <property type="evidence" value="ECO:0007669"/>
    <property type="project" value="UniProtKB-UniRule"/>
</dbReference>
<dbReference type="GO" id="GO:0046718">
    <property type="term" value="P:symbiont entry into host cell"/>
    <property type="evidence" value="ECO:0007669"/>
    <property type="project" value="UniProtKB-UniRule"/>
</dbReference>
<dbReference type="Gene3D" id="2.70.9.10">
    <property type="entry name" value="Adenovirus Type 2 Hexon, domain 4"/>
    <property type="match status" value="2"/>
</dbReference>
<dbReference type="Gene3D" id="3.90.39.10">
    <property type="entry name" value="Hexon Major Viral Coat Protein, domain 2"/>
    <property type="match status" value="1"/>
</dbReference>
<dbReference type="Gene3D" id="3.90.249.10">
    <property type="entry name" value="Hexon Major Viral Coat Protein, domain 3"/>
    <property type="match status" value="2"/>
</dbReference>
<dbReference type="HAMAP" id="MF_04051">
    <property type="entry name" value="ADV_CAPSH"/>
    <property type="match status" value="1"/>
</dbReference>
<dbReference type="InterPro" id="IPR016108">
    <property type="entry name" value="Adenovirus_Pll_hexon_C"/>
</dbReference>
<dbReference type="InterPro" id="IPR016107">
    <property type="entry name" value="Adenovirus_Pll_hexon_N"/>
</dbReference>
<dbReference type="InterPro" id="IPR044942">
    <property type="entry name" value="Adenovirus_Pll_hexon_sub2"/>
</dbReference>
<dbReference type="InterPro" id="IPR016110">
    <property type="entry name" value="Adenovirus_Pll_hexon_sub3"/>
</dbReference>
<dbReference type="InterPro" id="IPR037542">
    <property type="entry name" value="ADV_hexon"/>
</dbReference>
<dbReference type="InterPro" id="IPR016112">
    <property type="entry name" value="VP_dsDNA_II"/>
</dbReference>
<dbReference type="Pfam" id="PF01065">
    <property type="entry name" value="Adeno_hexon"/>
    <property type="match status" value="1"/>
</dbReference>
<dbReference type="Pfam" id="PF03678">
    <property type="entry name" value="Adeno_hexon_C"/>
    <property type="match status" value="1"/>
</dbReference>
<dbReference type="SUPFAM" id="SSF49749">
    <property type="entry name" value="Group II dsDNA viruses VP"/>
    <property type="match status" value="2"/>
</dbReference>
<proteinExistence type="inferred from homology"/>
<comment type="function">
    <text evidence="1">Major capsid protein that self-associates to form 240 hexon trimers, each in the shape of a hexagon, building most of the pseudo T=25 capsid. Assembled into trimeric units with the help of the chaperone shutoff protein. Transported by pre-protein VI to the nucleus where it associates with other structural proteins to form an empty capsid. Might be involved, through its interaction with host dyneins, in the intracellular microtubule-dependent transport of incoming viral capsid to the nucleus.</text>
</comment>
<comment type="subunit">
    <text evidence="1">Homotrimer. Interacts with the capsid vertex protein; this interaction binds the peripentonal hexons to the neighboring penton base. Interacts with the hexon-linking protein; this interaction tethers the hexons surrounding the penton to those situated in the central plate of the facet. Interacts with the hexon-interlacing protein; this interaction lashes the hexons together. Interacts with host dyneins DYNC1LI1 and DYNC1I2; this interaction might be involved in intracellular microtubule-dependent transport of incoming viral capsid. Interacts with the shutoff protein; this interaction allows folding and formation of hexons trimers. Interacts with pre-protein VI; this interaction probably allows nuclear import of hexon trimers and possibly pre-capsid assembly.</text>
</comment>
<comment type="subcellular location">
    <subcellularLocation>
        <location evidence="1">Virion</location>
    </subcellularLocation>
    <subcellularLocation>
        <location evidence="1">Host nucleus</location>
    </subcellularLocation>
    <text evidence="1">Forms the capsid icosahedric shell. Present in 720 copies per virion, assembled in 240 trimers.</text>
</comment>
<comment type="induction">
    <text evidence="1">Expressed in the late phase of the viral replicative cycle.</text>
</comment>
<comment type="miscellaneous">
    <text evidence="1">All late proteins expressed from the major late promoter are produced by alternative splicing and alternative polyadenylation of the same gene giving rise to non-overlapping ORFs. A leader sequence is present in the N-terminus of all these mRNAs and is recognized by the viral shutoff protein to provide expression although conventional translation via ribosome scanning from the cap has been shut off in the host cell.</text>
</comment>
<comment type="similarity">
    <text evidence="1 2">Belongs to the adenoviridae hexon protein family.</text>
</comment>